<evidence type="ECO:0000250" key="1">
    <source>
        <dbReference type="UniProtKB" id="Q9CQL2"/>
    </source>
</evidence>
<evidence type="ECO:0000255" key="2"/>
<evidence type="ECO:0000256" key="3">
    <source>
        <dbReference type="SAM" id="MobiDB-lite"/>
    </source>
</evidence>
<comment type="function">
    <text evidence="1">Regulator of histone epigenetic modifications and chromatin compaction into the sperm head, required for histone-to-protamine (HTP) transition. HTP is a key event in which somatic histones are first replaced by testis-specific histone variants, then transition proteins (TNPs) are incorporated into the spermatid nucleus, and finally protamines (PRMs) replace the TNPs to promote chromatin condensation.</text>
</comment>
<comment type="subcellular location">
    <subcellularLocation>
        <location evidence="1">Nucleus</location>
    </subcellularLocation>
    <text evidence="1">Forms condensates in the nucleus through liquid-liquid phase separation.</text>
</comment>
<name>CCER1_BOVIN</name>
<accession>Q2T9P9</accession>
<proteinExistence type="evidence at transcript level"/>
<reference key="1">
    <citation type="submission" date="2005-12" db="EMBL/GenBank/DDBJ databases">
        <authorList>
            <consortium name="NIH - Mammalian Gene Collection (MGC) project"/>
        </authorList>
    </citation>
    <scope>NUCLEOTIDE SEQUENCE [LARGE SCALE MRNA]</scope>
    <source>
        <strain>Crossbred X Angus</strain>
        <tissue>Liver</tissue>
    </source>
</reference>
<dbReference type="EMBL" id="BC111324">
    <property type="protein sequence ID" value="AAI11325.1"/>
    <property type="molecule type" value="mRNA"/>
</dbReference>
<dbReference type="RefSeq" id="NP_001033667.1">
    <property type="nucleotide sequence ID" value="NM_001038578.2"/>
</dbReference>
<dbReference type="RefSeq" id="XP_059742711.1">
    <property type="nucleotide sequence ID" value="XM_059886728.1"/>
</dbReference>
<dbReference type="SMR" id="Q2T9P9"/>
<dbReference type="FunCoup" id="Q2T9P9">
    <property type="interactions" value="5"/>
</dbReference>
<dbReference type="STRING" id="9913.ENSBTAP00000051759"/>
<dbReference type="PaxDb" id="9913-ENSBTAP00000051759"/>
<dbReference type="Ensembl" id="ENSBTAT00000009254.5">
    <property type="protein sequence ID" value="ENSBTAP00000051759.1"/>
    <property type="gene ID" value="ENSBTAG00000007035.5"/>
</dbReference>
<dbReference type="GeneID" id="615630"/>
<dbReference type="KEGG" id="bta:615630"/>
<dbReference type="CTD" id="196477"/>
<dbReference type="VEuPathDB" id="HostDB:ENSBTAG00000007035"/>
<dbReference type="VGNC" id="VGNC:26937">
    <property type="gene designation" value="CCER1"/>
</dbReference>
<dbReference type="eggNOG" id="ENOG502S11C">
    <property type="taxonomic scope" value="Eukaryota"/>
</dbReference>
<dbReference type="GeneTree" id="ENSGT00730000111529"/>
<dbReference type="HOGENOM" id="CLU_794441_0_0_1"/>
<dbReference type="InParanoid" id="Q2T9P9"/>
<dbReference type="OMA" id="PLCFCCC"/>
<dbReference type="OrthoDB" id="9451863at2759"/>
<dbReference type="Proteomes" id="UP000009136">
    <property type="component" value="Chromosome 5"/>
</dbReference>
<dbReference type="Bgee" id="ENSBTAG00000007035">
    <property type="expression patterns" value="Expressed in semen and 9 other cell types or tissues"/>
</dbReference>
<dbReference type="GO" id="GO:0005634">
    <property type="term" value="C:nucleus"/>
    <property type="evidence" value="ECO:0000250"/>
    <property type="project" value="UniProtKB"/>
</dbReference>
<dbReference type="GO" id="GO:0035092">
    <property type="term" value="P:sperm DNA condensation"/>
    <property type="evidence" value="ECO:0000250"/>
    <property type="project" value="UniProtKB"/>
</dbReference>
<dbReference type="GO" id="GO:0007283">
    <property type="term" value="P:spermatogenesis"/>
    <property type="evidence" value="ECO:0000250"/>
    <property type="project" value="UniProtKB"/>
</dbReference>
<dbReference type="InterPro" id="IPR027889">
    <property type="entry name" value="CCER1"/>
</dbReference>
<dbReference type="InterPro" id="IPR052696">
    <property type="entry name" value="Coiled-coil_domain"/>
</dbReference>
<dbReference type="PANTHER" id="PTHR37337">
    <property type="entry name" value="COILED-COIL DOMAIN-CONTAINING GLUTAMATE-RICH PROTEIN 1"/>
    <property type="match status" value="1"/>
</dbReference>
<dbReference type="PANTHER" id="PTHR37337:SF1">
    <property type="entry name" value="COILED-COIL DOMAIN-CONTAINING GLUTAMATE-RICH PROTEIN 1"/>
    <property type="match status" value="1"/>
</dbReference>
<dbReference type="Pfam" id="PF15482">
    <property type="entry name" value="CCER1"/>
    <property type="match status" value="1"/>
</dbReference>
<sequence>MTQTLDTKEDPLNLGGGWASSAPLRTWSFGPRRRRGAPVYRRRPRYGPKAEYEPPRKQAKQQYGPGPWFQPPWRPYWAVYSNWGRWRGPWCPPPAGFRKPPGRVQVIRVYGLHPLCLCCCSCCHGPWNPGWARPPGRKKRWGRRGRGLRRHPRRSAQRSPPVDLSTLLRPVNLYGWRAPGMRAPRNTTQFIMNQIYEDMRQQEKLERQQEALRAQQAQAASTASPEGAFGNDVPPSGGQEDEELQDTLYSFVRNPSLVFSPDPDEEKQTATSQLVEEEEEGEREEEEEEWCDEEECDGKELESQEEDEESEAKDEEDEESEAKDEEEGEEADYMEEREEEDEEDEAEEIAEEEEGLAEDEQTEEENHLPLEMPLSFLVGAEEERENFMNCTYLSPKQGIPKVAQEALFMVQDINC</sequence>
<gene>
    <name type="primary">CCER1</name>
</gene>
<organism>
    <name type="scientific">Bos taurus</name>
    <name type="common">Bovine</name>
    <dbReference type="NCBI Taxonomy" id="9913"/>
    <lineage>
        <taxon>Eukaryota</taxon>
        <taxon>Metazoa</taxon>
        <taxon>Chordata</taxon>
        <taxon>Craniata</taxon>
        <taxon>Vertebrata</taxon>
        <taxon>Euteleostomi</taxon>
        <taxon>Mammalia</taxon>
        <taxon>Eutheria</taxon>
        <taxon>Laurasiatheria</taxon>
        <taxon>Artiodactyla</taxon>
        <taxon>Ruminantia</taxon>
        <taxon>Pecora</taxon>
        <taxon>Bovidae</taxon>
        <taxon>Bovinae</taxon>
        <taxon>Bos</taxon>
    </lineage>
</organism>
<keyword id="KW-0175">Coiled coil</keyword>
<keyword id="KW-0221">Differentiation</keyword>
<keyword id="KW-0539">Nucleus</keyword>
<keyword id="KW-1185">Reference proteome</keyword>
<keyword id="KW-0744">Spermatogenesis</keyword>
<feature type="chain" id="PRO_0000288856" description="Coiled-coil domain-containing glutamate-rich protein 1">
    <location>
        <begin position="1"/>
        <end position="415"/>
    </location>
</feature>
<feature type="region of interest" description="Disordered" evidence="3">
    <location>
        <begin position="1"/>
        <end position="20"/>
    </location>
</feature>
<feature type="region of interest" description="Disordered" evidence="3">
    <location>
        <begin position="29"/>
        <end position="64"/>
    </location>
</feature>
<feature type="region of interest" description="Disordered" evidence="3">
    <location>
        <begin position="133"/>
        <end position="162"/>
    </location>
</feature>
<feature type="region of interest" description="Disordered" evidence="3">
    <location>
        <begin position="202"/>
        <end position="241"/>
    </location>
</feature>
<feature type="region of interest" description="Disordered" evidence="3">
    <location>
        <begin position="255"/>
        <end position="372"/>
    </location>
</feature>
<feature type="coiled-coil region" evidence="2">
    <location>
        <begin position="197"/>
        <end position="224"/>
    </location>
</feature>
<feature type="coiled-coil region" evidence="2">
    <location>
        <begin position="264"/>
        <end position="366"/>
    </location>
</feature>
<feature type="compositionally biased region" description="Basic and acidic residues" evidence="3">
    <location>
        <begin position="1"/>
        <end position="11"/>
    </location>
</feature>
<feature type="compositionally biased region" description="Basic residues" evidence="3">
    <location>
        <begin position="31"/>
        <end position="46"/>
    </location>
</feature>
<feature type="compositionally biased region" description="Basic residues" evidence="3">
    <location>
        <begin position="135"/>
        <end position="156"/>
    </location>
</feature>
<feature type="compositionally biased region" description="Low complexity" evidence="3">
    <location>
        <begin position="211"/>
        <end position="220"/>
    </location>
</feature>
<feature type="compositionally biased region" description="Acidic residues" evidence="3">
    <location>
        <begin position="275"/>
        <end position="363"/>
    </location>
</feature>
<protein>
    <recommendedName>
        <fullName>Coiled-coil domain-containing glutamate-rich protein 1</fullName>
    </recommendedName>
</protein>